<comment type="function">
    <text evidence="5">Catalyzes the conversion of 5-phosphoribosylanthranilate to l-(O-carboxyphenylamino)-l-deoxyribulose-5-phosphate, which is the third step of the tryptophan biosynthetic pathway.</text>
</comment>
<comment type="catalytic activity">
    <reaction evidence="5">
        <text>N-(5-phospho-beta-D-ribosyl)anthranilate = 1-(2-carboxyphenylamino)-1-deoxy-D-ribulose 5-phosphate</text>
        <dbReference type="Rhea" id="RHEA:21540"/>
        <dbReference type="ChEBI" id="CHEBI:18277"/>
        <dbReference type="ChEBI" id="CHEBI:58613"/>
        <dbReference type="EC" id="5.3.1.24"/>
    </reaction>
    <physiologicalReaction direction="left-to-right" evidence="5">
        <dbReference type="Rhea" id="RHEA:21541"/>
    </physiologicalReaction>
</comment>
<comment type="pathway">
    <text evidence="5">Amino-acid biosynthesis; L-tryptophan biosynthesis; L-tryptophan from chorismate: step 3/5.</text>
</comment>
<comment type="subcellular location">
    <subcellularLocation>
        <location evidence="1">Plastid</location>
        <location evidence="1">Chloroplast</location>
    </subcellularLocation>
</comment>
<comment type="alternative products">
    <event type="alternative splicing"/>
    <isoform>
        <id>Q42440-1</id>
        <name>1</name>
        <sequence type="displayed"/>
    </isoform>
    <text>A number of isoforms are produced. According to EST sequences.</text>
</comment>
<comment type="tissue specificity">
    <text evidence="2">Expressed in roots and shoots.</text>
</comment>
<comment type="induction">
    <text evidence="2">By silver nitrate and UV irradiation.</text>
</comment>
<comment type="disruption phenotype">
    <text evidence="2 3">Bushy morphology, reduced fertility, blue fluorescence under UV light and resistance to the anthranilate analog 6-methylanthranilate.</text>
</comment>
<comment type="similarity">
    <text evidence="4">Belongs to the TrpF family.</text>
</comment>
<accession>Q42440</accession>
<accession>Q3EDG7</accession>
<accession>Q7G9J9</accession>
<protein>
    <recommendedName>
        <fullName>N-(5'-phosphoribosyl)anthranilate isomerase 1, chloroplastic</fullName>
        <ecNumber evidence="5">5.3.1.24</ecNumber>
    </recommendedName>
</protein>
<organism>
    <name type="scientific">Arabidopsis thaliana</name>
    <name type="common">Mouse-ear cress</name>
    <dbReference type="NCBI Taxonomy" id="3702"/>
    <lineage>
        <taxon>Eukaryota</taxon>
        <taxon>Viridiplantae</taxon>
        <taxon>Streptophyta</taxon>
        <taxon>Embryophyta</taxon>
        <taxon>Tracheophyta</taxon>
        <taxon>Spermatophyta</taxon>
        <taxon>Magnoliopsida</taxon>
        <taxon>eudicotyledons</taxon>
        <taxon>Gunneridae</taxon>
        <taxon>Pentapetalae</taxon>
        <taxon>rosids</taxon>
        <taxon>malvids</taxon>
        <taxon>Brassicales</taxon>
        <taxon>Brassicaceae</taxon>
        <taxon>Camelineae</taxon>
        <taxon>Arabidopsis</taxon>
    </lineage>
</organism>
<sequence>MSTGISTDLHVHFGALNFSKTYKSGLSNRTVSFSRVGYAQNRKLSCSVSNTENVAPKDDERGKDRPLVKMCGITSARDAAMAVEAGADFIGMIIWPHSKRSISLSVAKDISKVAREGGAKPVGVFVEDDENTILRAADSSDLELVQLHGNGSRAAFSRLVRKRRVIYVLNANQDGKLLNEVPEEDCHLADWILVDSATGGSGHGFNWAQFKLPSVRSRNGWLLAGGINPTNVSEALSILQPDGIDVSSGICGTDGIQKDKSKISSFITAVRSVHY</sequence>
<evidence type="ECO:0000255" key="1"/>
<evidence type="ECO:0000269" key="2">
    <source>
    </source>
</evidence>
<evidence type="ECO:0000269" key="3">
    <source>
    </source>
</evidence>
<evidence type="ECO:0000305" key="4"/>
<evidence type="ECO:0000305" key="5">
    <source>
    </source>
</evidence>
<keyword id="KW-0025">Alternative splicing</keyword>
<keyword id="KW-0028">Amino-acid biosynthesis</keyword>
<keyword id="KW-0057">Aromatic amino acid biosynthesis</keyword>
<keyword id="KW-0150">Chloroplast</keyword>
<keyword id="KW-0413">Isomerase</keyword>
<keyword id="KW-0934">Plastid</keyword>
<keyword id="KW-1185">Reference proteome</keyword>
<keyword id="KW-0809">Transit peptide</keyword>
<keyword id="KW-0822">Tryptophan biosynthesis</keyword>
<proteinExistence type="evidence at protein level"/>
<feature type="transit peptide" description="Chloroplast" evidence="1">
    <location>
        <begin position="1"/>
        <end position="32"/>
    </location>
</feature>
<feature type="chain" id="PRO_0000417453" description="N-(5'-phosphoribosyl)anthranilate isomerase 1, chloroplastic">
    <location>
        <begin position="33"/>
        <end position="275"/>
    </location>
</feature>
<name>PAI1_ARATH</name>
<reference key="1">
    <citation type="journal article" date="1995" name="Cell">
        <title>Epigenetic control of an endogenous gene family is revealed by a novel blue fluorescent mutant of Arabidopsis.</title>
        <authorList>
            <person name="Bender J."/>
            <person name="Fink G.R."/>
        </authorList>
    </citation>
    <scope>NUCLEOTIDE SEQUENCE [GENOMIC DNA]</scope>
    <source>
        <strain>cv. Wassilewskija</strain>
    </source>
</reference>
<reference key="2">
    <citation type="journal article" date="1995" name="Plant Cell">
        <title>Arabidopsis phosphoribosylanthranilate isomerase: molecular genetic analysis of triplicate tryptophan pathway genes.</title>
        <authorList>
            <person name="Li J."/>
            <person name="Zhao J."/>
            <person name="Rose A.B."/>
            <person name="Schmidt R."/>
            <person name="Last R.L."/>
        </authorList>
    </citation>
    <scope>NUCLEOTIDE SEQUENCE [GENOMIC DNA]</scope>
    <scope>FUNCTION</scope>
    <scope>CATALYTIC ACTIVITY</scope>
    <scope>PATHWAY</scope>
    <scope>DISRUPTION PHENOTYPE</scope>
    <source>
        <strain>cv. Columbia</strain>
    </source>
</reference>
<reference key="3">
    <citation type="journal article" date="1999" name="Genetics">
        <title>Arabidopsis PAI gene arrangements, cytosine methylation and expression.</title>
        <authorList>
            <person name="Melquist S."/>
            <person name="Luff B."/>
            <person name="Bender J."/>
        </authorList>
    </citation>
    <scope>NUCLEOTIDE SEQUENCE [GENOMIC DNA]</scope>
    <source>
        <strain>cv. Columbia</strain>
    </source>
</reference>
<reference key="4">
    <citation type="journal article" date="2000" name="Nature">
        <title>Sequence and analysis of chromosome 1 of the plant Arabidopsis thaliana.</title>
        <authorList>
            <person name="Theologis A."/>
            <person name="Ecker J.R."/>
            <person name="Palm C.J."/>
            <person name="Federspiel N.A."/>
            <person name="Kaul S."/>
            <person name="White O."/>
            <person name="Alonso J."/>
            <person name="Altafi H."/>
            <person name="Araujo R."/>
            <person name="Bowman C.L."/>
            <person name="Brooks S.Y."/>
            <person name="Buehler E."/>
            <person name="Chan A."/>
            <person name="Chao Q."/>
            <person name="Chen H."/>
            <person name="Cheuk R.F."/>
            <person name="Chin C.W."/>
            <person name="Chung M.K."/>
            <person name="Conn L."/>
            <person name="Conway A.B."/>
            <person name="Conway A.R."/>
            <person name="Creasy T.H."/>
            <person name="Dewar K."/>
            <person name="Dunn P."/>
            <person name="Etgu P."/>
            <person name="Feldblyum T.V."/>
            <person name="Feng J.-D."/>
            <person name="Fong B."/>
            <person name="Fujii C.Y."/>
            <person name="Gill J.E."/>
            <person name="Goldsmith A.D."/>
            <person name="Haas B."/>
            <person name="Hansen N.F."/>
            <person name="Hughes B."/>
            <person name="Huizar L."/>
            <person name="Hunter J.L."/>
            <person name="Jenkins J."/>
            <person name="Johnson-Hopson C."/>
            <person name="Khan S."/>
            <person name="Khaykin E."/>
            <person name="Kim C.J."/>
            <person name="Koo H.L."/>
            <person name="Kremenetskaia I."/>
            <person name="Kurtz D.B."/>
            <person name="Kwan A."/>
            <person name="Lam B."/>
            <person name="Langin-Hooper S."/>
            <person name="Lee A."/>
            <person name="Lee J.M."/>
            <person name="Lenz C.A."/>
            <person name="Li J.H."/>
            <person name="Li Y.-P."/>
            <person name="Lin X."/>
            <person name="Liu S.X."/>
            <person name="Liu Z.A."/>
            <person name="Luros J.S."/>
            <person name="Maiti R."/>
            <person name="Marziali A."/>
            <person name="Militscher J."/>
            <person name="Miranda M."/>
            <person name="Nguyen M."/>
            <person name="Nierman W.C."/>
            <person name="Osborne B.I."/>
            <person name="Pai G."/>
            <person name="Peterson J."/>
            <person name="Pham P.K."/>
            <person name="Rizzo M."/>
            <person name="Rooney T."/>
            <person name="Rowley D."/>
            <person name="Sakano H."/>
            <person name="Salzberg S.L."/>
            <person name="Schwartz J.R."/>
            <person name="Shinn P."/>
            <person name="Southwick A.M."/>
            <person name="Sun H."/>
            <person name="Tallon L.J."/>
            <person name="Tambunga G."/>
            <person name="Toriumi M.J."/>
            <person name="Town C.D."/>
            <person name="Utterback T."/>
            <person name="Van Aken S."/>
            <person name="Vaysberg M."/>
            <person name="Vysotskaia V.S."/>
            <person name="Walker M."/>
            <person name="Wu D."/>
            <person name="Yu G."/>
            <person name="Fraser C.M."/>
            <person name="Venter J.C."/>
            <person name="Davis R.W."/>
        </authorList>
    </citation>
    <scope>NUCLEOTIDE SEQUENCE [LARGE SCALE GENOMIC DNA]</scope>
    <source>
        <strain>cv. Columbia</strain>
    </source>
</reference>
<reference key="5">
    <citation type="journal article" date="2017" name="Plant J.">
        <title>Araport11: a complete reannotation of the Arabidopsis thaliana reference genome.</title>
        <authorList>
            <person name="Cheng C.Y."/>
            <person name="Krishnakumar V."/>
            <person name="Chan A.P."/>
            <person name="Thibaud-Nissen F."/>
            <person name="Schobel S."/>
            <person name="Town C.D."/>
        </authorList>
    </citation>
    <scope>GENOME REANNOTATION</scope>
    <source>
        <strain>cv. Columbia</strain>
    </source>
</reference>
<reference key="6">
    <citation type="journal article" date="2003" name="Science">
        <title>Empirical analysis of transcriptional activity in the Arabidopsis genome.</title>
        <authorList>
            <person name="Yamada K."/>
            <person name="Lim J."/>
            <person name="Dale J.M."/>
            <person name="Chen H."/>
            <person name="Shinn P."/>
            <person name="Palm C.J."/>
            <person name="Southwick A.M."/>
            <person name="Wu H.C."/>
            <person name="Kim C.J."/>
            <person name="Nguyen M."/>
            <person name="Pham P.K."/>
            <person name="Cheuk R.F."/>
            <person name="Karlin-Newmann G."/>
            <person name="Liu S.X."/>
            <person name="Lam B."/>
            <person name="Sakano H."/>
            <person name="Wu T."/>
            <person name="Yu G."/>
            <person name="Miranda M."/>
            <person name="Quach H.L."/>
            <person name="Tripp M."/>
            <person name="Chang C.H."/>
            <person name="Lee J.M."/>
            <person name="Toriumi M.J."/>
            <person name="Chan M.M."/>
            <person name="Tang C.C."/>
            <person name="Onodera C.S."/>
            <person name="Deng J.M."/>
            <person name="Akiyama K."/>
            <person name="Ansari Y."/>
            <person name="Arakawa T."/>
            <person name="Banh J."/>
            <person name="Banno F."/>
            <person name="Bowser L."/>
            <person name="Brooks S.Y."/>
            <person name="Carninci P."/>
            <person name="Chao Q."/>
            <person name="Choy N."/>
            <person name="Enju A."/>
            <person name="Goldsmith A.D."/>
            <person name="Gurjal M."/>
            <person name="Hansen N.F."/>
            <person name="Hayashizaki Y."/>
            <person name="Johnson-Hopson C."/>
            <person name="Hsuan V.W."/>
            <person name="Iida K."/>
            <person name="Karnes M."/>
            <person name="Khan S."/>
            <person name="Koesema E."/>
            <person name="Ishida J."/>
            <person name="Jiang P.X."/>
            <person name="Jones T."/>
            <person name="Kawai J."/>
            <person name="Kamiya A."/>
            <person name="Meyers C."/>
            <person name="Nakajima M."/>
            <person name="Narusaka M."/>
            <person name="Seki M."/>
            <person name="Sakurai T."/>
            <person name="Satou M."/>
            <person name="Tamse R."/>
            <person name="Vaysberg M."/>
            <person name="Wallender E.K."/>
            <person name="Wong C."/>
            <person name="Yamamura Y."/>
            <person name="Yuan S."/>
            <person name="Shinozaki K."/>
            <person name="Davis R.W."/>
            <person name="Theologis A."/>
            <person name="Ecker J.R."/>
        </authorList>
    </citation>
    <scope>NUCLEOTIDE SEQUENCE [LARGE SCALE MRNA]</scope>
    <source>
        <strain>cv. Columbia</strain>
    </source>
</reference>
<reference key="7">
    <citation type="journal article" date="2001" name="Planta">
        <title>Differential expression of triplicate phosphoribosylanthranilate isomerase isogenes in the tryptophan biosynthetic pathway of Arabidopsis thaliana (L.) Heynh.</title>
        <authorList>
            <person name="He Y."/>
            <person name="Li J."/>
        </authorList>
    </citation>
    <scope>TISSUE SPECIFICITY</scope>
    <scope>INDUCTION</scope>
    <scope>DISRUPTION PHENOTYPE</scope>
    <source>
        <strain>cv. Wassilewskija</strain>
    </source>
</reference>
<gene>
    <name type="primary">PAI1</name>
    <name type="synonym">TRP6</name>
    <name type="ordered locus">At1g07780</name>
    <name type="ORF">F24B9.11</name>
</gene>
<dbReference type="EC" id="5.3.1.24" evidence="5"/>
<dbReference type="EMBL" id="U34756">
    <property type="protein sequence ID" value="AAB03498.1"/>
    <property type="molecule type" value="Genomic_DNA"/>
</dbReference>
<dbReference type="EMBL" id="U18970">
    <property type="protein sequence ID" value="AAC49005.1"/>
    <property type="molecule type" value="Genomic_DNA"/>
</dbReference>
<dbReference type="EMBL" id="AF130878">
    <property type="protein sequence ID" value="AAD38141.1"/>
    <property type="molecule type" value="Genomic_DNA"/>
</dbReference>
<dbReference type="EMBL" id="AC007583">
    <property type="protein sequence ID" value="AAF75075.1"/>
    <property type="molecule type" value="Genomic_DNA"/>
</dbReference>
<dbReference type="EMBL" id="CP002684">
    <property type="protein sequence ID" value="AEE28179.1"/>
    <property type="molecule type" value="Genomic_DNA"/>
</dbReference>
<dbReference type="EMBL" id="CP002684">
    <property type="protein sequence ID" value="AEE28180.1"/>
    <property type="molecule type" value="Genomic_DNA"/>
</dbReference>
<dbReference type="EMBL" id="CP002684">
    <property type="protein sequence ID" value="AEE28181.1"/>
    <property type="molecule type" value="Genomic_DNA"/>
</dbReference>
<dbReference type="EMBL" id="CP002684">
    <property type="protein sequence ID" value="AEE28183.1"/>
    <property type="molecule type" value="Genomic_DNA"/>
</dbReference>
<dbReference type="EMBL" id="CP002684">
    <property type="protein sequence ID" value="ANM60071.1"/>
    <property type="molecule type" value="Genomic_DNA"/>
</dbReference>
<dbReference type="EMBL" id="CP002684">
    <property type="protein sequence ID" value="ANM60072.1"/>
    <property type="molecule type" value="Genomic_DNA"/>
</dbReference>
<dbReference type="EMBL" id="CP002684">
    <property type="protein sequence ID" value="ANM60074.1"/>
    <property type="molecule type" value="Genomic_DNA"/>
</dbReference>
<dbReference type="EMBL" id="CP002684">
    <property type="protein sequence ID" value="ANM60075.1"/>
    <property type="molecule type" value="Genomic_DNA"/>
</dbReference>
<dbReference type="EMBL" id="AY081274">
    <property type="protein sequence ID" value="AAL91163.1"/>
    <property type="molecule type" value="mRNA"/>
</dbReference>
<dbReference type="EMBL" id="BT003351">
    <property type="protein sequence ID" value="AAO29969.1"/>
    <property type="molecule type" value="mRNA"/>
</dbReference>
<dbReference type="PIR" id="C86213">
    <property type="entry name" value="C86213"/>
</dbReference>
<dbReference type="RefSeq" id="NP_001184931.1">
    <molecule id="Q42440-1"/>
    <property type="nucleotide sequence ID" value="NM_001198002.2"/>
</dbReference>
<dbReference type="RefSeq" id="NP_001322383.1">
    <molecule id="Q42440-1"/>
    <property type="nucleotide sequence ID" value="NM_001331736.1"/>
</dbReference>
<dbReference type="RefSeq" id="NP_001322384.1">
    <molecule id="Q42440-1"/>
    <property type="nucleotide sequence ID" value="NM_001331729.1"/>
</dbReference>
<dbReference type="RefSeq" id="NP_001322386.1">
    <molecule id="Q42440-1"/>
    <property type="nucleotide sequence ID" value="NM_001331731.1"/>
</dbReference>
<dbReference type="RefSeq" id="NP_001322387.1">
    <molecule id="Q42440-1"/>
    <property type="nucleotide sequence ID" value="NM_001331732.1"/>
</dbReference>
<dbReference type="RefSeq" id="NP_172257.1">
    <molecule id="Q42440-1"/>
    <property type="nucleotide sequence ID" value="NM_100652.5"/>
</dbReference>
<dbReference type="RefSeq" id="NP_849606.1">
    <molecule id="Q42440-1"/>
    <property type="nucleotide sequence ID" value="NM_179275.4"/>
</dbReference>
<dbReference type="RefSeq" id="NP_973784.2">
    <molecule id="Q42440-1"/>
    <property type="nucleotide sequence ID" value="NM_202055.4"/>
</dbReference>
<dbReference type="SMR" id="Q42440"/>
<dbReference type="BioGRID" id="22533">
    <property type="interactions" value="1"/>
</dbReference>
<dbReference type="FunCoup" id="Q42440">
    <property type="interactions" value="363"/>
</dbReference>
<dbReference type="IntAct" id="Q42440">
    <property type="interactions" value="4"/>
</dbReference>
<dbReference type="STRING" id="3702.Q42440"/>
<dbReference type="PaxDb" id="3702-AT1G07780.3"/>
<dbReference type="ProteomicsDB" id="248652">
    <molecule id="Q42440-1"/>
</dbReference>
<dbReference type="EnsemblPlants" id="AT1G07780.1">
    <molecule id="Q42440-1"/>
    <property type="protein sequence ID" value="AT1G07780.1"/>
    <property type="gene ID" value="AT1G07780"/>
</dbReference>
<dbReference type="EnsemblPlants" id="AT1G07780.10">
    <molecule id="Q42440-1"/>
    <property type="protein sequence ID" value="AT1G07780.10"/>
    <property type="gene ID" value="AT1G07780"/>
</dbReference>
<dbReference type="EnsemblPlants" id="AT1G07780.12">
    <molecule id="Q42440-1"/>
    <property type="protein sequence ID" value="AT1G07780.12"/>
    <property type="gene ID" value="AT1G07780"/>
</dbReference>
<dbReference type="EnsemblPlants" id="AT1G07780.13">
    <molecule id="Q42440-1"/>
    <property type="protein sequence ID" value="AT1G07780.13"/>
    <property type="gene ID" value="AT1G07780"/>
</dbReference>
<dbReference type="EnsemblPlants" id="AT1G07780.2">
    <molecule id="Q42440-1"/>
    <property type="protein sequence ID" value="AT1G07780.2"/>
    <property type="gene ID" value="AT1G07780"/>
</dbReference>
<dbReference type="EnsemblPlants" id="AT1G07780.3">
    <molecule id="Q42440-1"/>
    <property type="protein sequence ID" value="AT1G07780.3"/>
    <property type="gene ID" value="AT1G07780"/>
</dbReference>
<dbReference type="EnsemblPlants" id="AT1G07780.5">
    <molecule id="Q42440-1"/>
    <property type="protein sequence ID" value="AT1G07780.5"/>
    <property type="gene ID" value="AT1G07780"/>
</dbReference>
<dbReference type="EnsemblPlants" id="AT1G07780.9">
    <molecule id="Q42440-1"/>
    <property type="protein sequence ID" value="AT1G07780.9"/>
    <property type="gene ID" value="AT1G07780"/>
</dbReference>
<dbReference type="GeneID" id="837292"/>
<dbReference type="Gramene" id="AT1G07780.1">
    <molecule id="Q42440-1"/>
    <property type="protein sequence ID" value="AT1G07780.1"/>
    <property type="gene ID" value="AT1G07780"/>
</dbReference>
<dbReference type="Gramene" id="AT1G07780.10">
    <molecule id="Q42440-1"/>
    <property type="protein sequence ID" value="AT1G07780.10"/>
    <property type="gene ID" value="AT1G07780"/>
</dbReference>
<dbReference type="Gramene" id="AT1G07780.12">
    <molecule id="Q42440-1"/>
    <property type="protein sequence ID" value="AT1G07780.12"/>
    <property type="gene ID" value="AT1G07780"/>
</dbReference>
<dbReference type="Gramene" id="AT1G07780.13">
    <molecule id="Q42440-1"/>
    <property type="protein sequence ID" value="AT1G07780.13"/>
    <property type="gene ID" value="AT1G07780"/>
</dbReference>
<dbReference type="Gramene" id="AT1G07780.2">
    <molecule id="Q42440-1"/>
    <property type="protein sequence ID" value="AT1G07780.2"/>
    <property type="gene ID" value="AT1G07780"/>
</dbReference>
<dbReference type="Gramene" id="AT1G07780.3">
    <molecule id="Q42440-1"/>
    <property type="protein sequence ID" value="AT1G07780.3"/>
    <property type="gene ID" value="AT1G07780"/>
</dbReference>
<dbReference type="Gramene" id="AT1G07780.5">
    <molecule id="Q42440-1"/>
    <property type="protein sequence ID" value="AT1G07780.5"/>
    <property type="gene ID" value="AT1G07780"/>
</dbReference>
<dbReference type="Gramene" id="AT1G07780.9">
    <molecule id="Q42440-1"/>
    <property type="protein sequence ID" value="AT1G07780.9"/>
    <property type="gene ID" value="AT1G07780"/>
</dbReference>
<dbReference type="KEGG" id="ath:AT1G07780"/>
<dbReference type="Araport" id="AT1G07780"/>
<dbReference type="TAIR" id="AT1G07780">
    <property type="gene designation" value="PAI1"/>
</dbReference>
<dbReference type="eggNOG" id="KOG4202">
    <property type="taxonomic scope" value="Eukaryota"/>
</dbReference>
<dbReference type="HOGENOM" id="CLU_076364_0_0_1"/>
<dbReference type="InParanoid" id="Q42440"/>
<dbReference type="OMA" id="FHGDESP"/>
<dbReference type="PhylomeDB" id="Q42440"/>
<dbReference type="BioCyc" id="ARA:AT1G07780-MONOMER"/>
<dbReference type="UniPathway" id="UPA00035">
    <property type="reaction ID" value="UER00042"/>
</dbReference>
<dbReference type="PRO" id="PR:Q42440"/>
<dbReference type="Proteomes" id="UP000006548">
    <property type="component" value="Chromosome 1"/>
</dbReference>
<dbReference type="ExpressionAtlas" id="Q42440">
    <property type="expression patterns" value="baseline and differential"/>
</dbReference>
<dbReference type="GO" id="GO:0009507">
    <property type="term" value="C:chloroplast"/>
    <property type="evidence" value="ECO:0007669"/>
    <property type="project" value="UniProtKB-SubCell"/>
</dbReference>
<dbReference type="GO" id="GO:0004640">
    <property type="term" value="F:phosphoribosylanthranilate isomerase activity"/>
    <property type="evidence" value="ECO:0000315"/>
    <property type="project" value="TAIR"/>
</dbReference>
<dbReference type="GO" id="GO:0000162">
    <property type="term" value="P:L-tryptophan biosynthetic process"/>
    <property type="evidence" value="ECO:0000315"/>
    <property type="project" value="TAIR"/>
</dbReference>
<dbReference type="CDD" id="cd00405">
    <property type="entry name" value="PRAI"/>
    <property type="match status" value="1"/>
</dbReference>
<dbReference type="FunFam" id="3.20.20.70:FF:000075">
    <property type="entry name" value="Tryptophan biosynthesis protein TRP1"/>
    <property type="match status" value="1"/>
</dbReference>
<dbReference type="Gene3D" id="3.20.20.70">
    <property type="entry name" value="Aldolase class I"/>
    <property type="match status" value="1"/>
</dbReference>
<dbReference type="HAMAP" id="MF_00135">
    <property type="entry name" value="PRAI"/>
    <property type="match status" value="1"/>
</dbReference>
<dbReference type="InterPro" id="IPR013785">
    <property type="entry name" value="Aldolase_TIM"/>
</dbReference>
<dbReference type="InterPro" id="IPR001240">
    <property type="entry name" value="PRAI_dom"/>
</dbReference>
<dbReference type="InterPro" id="IPR011060">
    <property type="entry name" value="RibuloseP-bd_barrel"/>
</dbReference>
<dbReference type="InterPro" id="IPR044643">
    <property type="entry name" value="TrpF_fam"/>
</dbReference>
<dbReference type="PANTHER" id="PTHR42894">
    <property type="entry name" value="N-(5'-PHOSPHORIBOSYL)ANTHRANILATE ISOMERASE"/>
    <property type="match status" value="1"/>
</dbReference>
<dbReference type="PANTHER" id="PTHR42894:SF1">
    <property type="entry name" value="N-(5'-PHOSPHORIBOSYL)ANTHRANILATE ISOMERASE"/>
    <property type="match status" value="1"/>
</dbReference>
<dbReference type="Pfam" id="PF00697">
    <property type="entry name" value="PRAI"/>
    <property type="match status" value="1"/>
</dbReference>
<dbReference type="SUPFAM" id="SSF51366">
    <property type="entry name" value="Ribulose-phoshate binding barrel"/>
    <property type="match status" value="1"/>
</dbReference>